<accession>A4XKX8</accession>
<sequence>MQHEIVIVLDFGGQYNQLIARRVRECGVYCEIWPYDTPLEKIIEKNPKGIIFTGGPSSVYEENAPVVDKKIFEIGVPILGICYGNQLIAYFLGGKVSTALFREYGKTHIKYNTNSPLFTGLPESSICWMSHTDFVEELPEGFEILASTENCAIAAFGSREKKIYGVQFHPEVVHTEFGQEIIKNFLFNICGCKGDWKTSSFIEERINEIRKIVGNQKVVCALSGGVDSSVAAVLVHKAIGKNLFCIFVDHGLLRKGEAEEVIKTFKGQFDMNVIKVDAKERFLKALCGVIDPERKRKIIGEEFIRVFEEEASKLGDVKFLVQGTIYPDVVESGVGKAATIKSHHNVGGLPEHIKFERIIEPLRELFKDEVRRVGVELGIPEKIVKRQPFPGPGLAIRIIGEVTEEKLEILREVDWIFRKEIEACGLDEEIWQYFAVLTDMRSVGVMGDERTYDYTVALRAVTSVDGMTADWARIPYDVLERVSNEIVNTVRKVNRVVYDITSKPPATIEWE</sequence>
<comment type="function">
    <text evidence="1">Catalyzes the synthesis of GMP from XMP.</text>
</comment>
<comment type="catalytic activity">
    <reaction evidence="1">
        <text>XMP + L-glutamine + ATP + H2O = GMP + L-glutamate + AMP + diphosphate + 2 H(+)</text>
        <dbReference type="Rhea" id="RHEA:11680"/>
        <dbReference type="ChEBI" id="CHEBI:15377"/>
        <dbReference type="ChEBI" id="CHEBI:15378"/>
        <dbReference type="ChEBI" id="CHEBI:29985"/>
        <dbReference type="ChEBI" id="CHEBI:30616"/>
        <dbReference type="ChEBI" id="CHEBI:33019"/>
        <dbReference type="ChEBI" id="CHEBI:57464"/>
        <dbReference type="ChEBI" id="CHEBI:58115"/>
        <dbReference type="ChEBI" id="CHEBI:58359"/>
        <dbReference type="ChEBI" id="CHEBI:456215"/>
        <dbReference type="EC" id="6.3.5.2"/>
    </reaction>
</comment>
<comment type="pathway">
    <text evidence="1">Purine metabolism; GMP biosynthesis; GMP from XMP (L-Gln route): step 1/1.</text>
</comment>
<comment type="subunit">
    <text evidence="1">Homodimer.</text>
</comment>
<keyword id="KW-0067">ATP-binding</keyword>
<keyword id="KW-0315">Glutamine amidotransferase</keyword>
<keyword id="KW-0332">GMP biosynthesis</keyword>
<keyword id="KW-0436">Ligase</keyword>
<keyword id="KW-0547">Nucleotide-binding</keyword>
<keyword id="KW-0658">Purine biosynthesis</keyword>
<evidence type="ECO:0000255" key="1">
    <source>
        <dbReference type="HAMAP-Rule" id="MF_00344"/>
    </source>
</evidence>
<dbReference type="EC" id="6.3.5.2" evidence="1"/>
<dbReference type="EMBL" id="CP000679">
    <property type="protein sequence ID" value="ABP67563.1"/>
    <property type="molecule type" value="Genomic_DNA"/>
</dbReference>
<dbReference type="RefSeq" id="WP_011917499.1">
    <property type="nucleotide sequence ID" value="NC_009437.1"/>
</dbReference>
<dbReference type="SMR" id="A4XKX8"/>
<dbReference type="STRING" id="351627.Csac_1978"/>
<dbReference type="KEGG" id="csc:Csac_1978"/>
<dbReference type="eggNOG" id="COG0518">
    <property type="taxonomic scope" value="Bacteria"/>
</dbReference>
<dbReference type="eggNOG" id="COG0519">
    <property type="taxonomic scope" value="Bacteria"/>
</dbReference>
<dbReference type="HOGENOM" id="CLU_014340_0_5_9"/>
<dbReference type="OrthoDB" id="9802219at2"/>
<dbReference type="UniPathway" id="UPA00189">
    <property type="reaction ID" value="UER00296"/>
</dbReference>
<dbReference type="Proteomes" id="UP000000256">
    <property type="component" value="Chromosome"/>
</dbReference>
<dbReference type="GO" id="GO:0005829">
    <property type="term" value="C:cytosol"/>
    <property type="evidence" value="ECO:0007669"/>
    <property type="project" value="TreeGrafter"/>
</dbReference>
<dbReference type="GO" id="GO:0005524">
    <property type="term" value="F:ATP binding"/>
    <property type="evidence" value="ECO:0007669"/>
    <property type="project" value="UniProtKB-UniRule"/>
</dbReference>
<dbReference type="GO" id="GO:0003921">
    <property type="term" value="F:GMP synthase activity"/>
    <property type="evidence" value="ECO:0007669"/>
    <property type="project" value="InterPro"/>
</dbReference>
<dbReference type="CDD" id="cd01742">
    <property type="entry name" value="GATase1_GMP_Synthase"/>
    <property type="match status" value="1"/>
</dbReference>
<dbReference type="CDD" id="cd01997">
    <property type="entry name" value="GMP_synthase_C"/>
    <property type="match status" value="1"/>
</dbReference>
<dbReference type="FunFam" id="3.30.300.10:FF:000002">
    <property type="entry name" value="GMP synthase [glutamine-hydrolyzing]"/>
    <property type="match status" value="1"/>
</dbReference>
<dbReference type="FunFam" id="3.40.50.620:FF:000001">
    <property type="entry name" value="GMP synthase [glutamine-hydrolyzing]"/>
    <property type="match status" value="1"/>
</dbReference>
<dbReference type="FunFam" id="3.40.50.880:FF:000001">
    <property type="entry name" value="GMP synthase [glutamine-hydrolyzing]"/>
    <property type="match status" value="1"/>
</dbReference>
<dbReference type="Gene3D" id="3.30.300.10">
    <property type="match status" value="1"/>
</dbReference>
<dbReference type="Gene3D" id="3.40.50.880">
    <property type="match status" value="1"/>
</dbReference>
<dbReference type="Gene3D" id="3.40.50.620">
    <property type="entry name" value="HUPs"/>
    <property type="match status" value="1"/>
</dbReference>
<dbReference type="HAMAP" id="MF_00344">
    <property type="entry name" value="GMP_synthase"/>
    <property type="match status" value="1"/>
</dbReference>
<dbReference type="InterPro" id="IPR029062">
    <property type="entry name" value="Class_I_gatase-like"/>
</dbReference>
<dbReference type="InterPro" id="IPR017926">
    <property type="entry name" value="GATASE"/>
</dbReference>
<dbReference type="InterPro" id="IPR001674">
    <property type="entry name" value="GMP_synth_C"/>
</dbReference>
<dbReference type="InterPro" id="IPR004739">
    <property type="entry name" value="GMP_synth_GATase"/>
</dbReference>
<dbReference type="InterPro" id="IPR022955">
    <property type="entry name" value="GMP_synthase"/>
</dbReference>
<dbReference type="InterPro" id="IPR025777">
    <property type="entry name" value="GMPS_ATP_PPase_dom"/>
</dbReference>
<dbReference type="InterPro" id="IPR022310">
    <property type="entry name" value="NAD/GMP_synthase"/>
</dbReference>
<dbReference type="InterPro" id="IPR014729">
    <property type="entry name" value="Rossmann-like_a/b/a_fold"/>
</dbReference>
<dbReference type="NCBIfam" id="TIGR00884">
    <property type="entry name" value="guaA_Cterm"/>
    <property type="match status" value="1"/>
</dbReference>
<dbReference type="NCBIfam" id="TIGR00888">
    <property type="entry name" value="guaA_Nterm"/>
    <property type="match status" value="1"/>
</dbReference>
<dbReference type="NCBIfam" id="NF000848">
    <property type="entry name" value="PRK00074.1"/>
    <property type="match status" value="1"/>
</dbReference>
<dbReference type="PANTHER" id="PTHR11922:SF2">
    <property type="entry name" value="GMP SYNTHASE [GLUTAMINE-HYDROLYZING]"/>
    <property type="match status" value="1"/>
</dbReference>
<dbReference type="PANTHER" id="PTHR11922">
    <property type="entry name" value="GMP SYNTHASE-RELATED"/>
    <property type="match status" value="1"/>
</dbReference>
<dbReference type="Pfam" id="PF00117">
    <property type="entry name" value="GATase"/>
    <property type="match status" value="1"/>
</dbReference>
<dbReference type="Pfam" id="PF00958">
    <property type="entry name" value="GMP_synt_C"/>
    <property type="match status" value="1"/>
</dbReference>
<dbReference type="Pfam" id="PF02540">
    <property type="entry name" value="NAD_synthase"/>
    <property type="match status" value="1"/>
</dbReference>
<dbReference type="PRINTS" id="PR00097">
    <property type="entry name" value="ANTSNTHASEII"/>
</dbReference>
<dbReference type="PRINTS" id="PR00099">
    <property type="entry name" value="CPSGATASE"/>
</dbReference>
<dbReference type="PRINTS" id="PR00096">
    <property type="entry name" value="GATASE"/>
</dbReference>
<dbReference type="SUPFAM" id="SSF52402">
    <property type="entry name" value="Adenine nucleotide alpha hydrolases-like"/>
    <property type="match status" value="1"/>
</dbReference>
<dbReference type="SUPFAM" id="SSF52317">
    <property type="entry name" value="Class I glutamine amidotransferase-like"/>
    <property type="match status" value="1"/>
</dbReference>
<dbReference type="PROSITE" id="PS51273">
    <property type="entry name" value="GATASE_TYPE_1"/>
    <property type="match status" value="1"/>
</dbReference>
<dbReference type="PROSITE" id="PS51553">
    <property type="entry name" value="GMPS_ATP_PPASE"/>
    <property type="match status" value="1"/>
</dbReference>
<organism>
    <name type="scientific">Caldicellulosiruptor saccharolyticus (strain ATCC 43494 / DSM 8903 / Tp8T 6331)</name>
    <dbReference type="NCBI Taxonomy" id="351627"/>
    <lineage>
        <taxon>Bacteria</taxon>
        <taxon>Bacillati</taxon>
        <taxon>Bacillota</taxon>
        <taxon>Bacillota incertae sedis</taxon>
        <taxon>Caldicellulosiruptorales</taxon>
        <taxon>Caldicellulosiruptoraceae</taxon>
        <taxon>Caldicellulosiruptor</taxon>
    </lineage>
</organism>
<protein>
    <recommendedName>
        <fullName evidence="1">GMP synthase [glutamine-hydrolyzing]</fullName>
        <ecNumber evidence="1">6.3.5.2</ecNumber>
    </recommendedName>
    <alternativeName>
        <fullName evidence="1">GMP synthetase</fullName>
    </alternativeName>
    <alternativeName>
        <fullName evidence="1">Glutamine amidotransferase</fullName>
    </alternativeName>
</protein>
<reference key="1">
    <citation type="submission" date="2007-04" db="EMBL/GenBank/DDBJ databases">
        <title>Genome sequence of the thermophilic hydrogen-producing bacterium Caldicellulosiruptor saccharolyticus DSM 8903.</title>
        <authorList>
            <person name="Copeland A."/>
            <person name="Lucas S."/>
            <person name="Lapidus A."/>
            <person name="Barry K."/>
            <person name="Detter J.C."/>
            <person name="Glavina del Rio T."/>
            <person name="Hammon N."/>
            <person name="Israni S."/>
            <person name="Dalin E."/>
            <person name="Tice H."/>
            <person name="Pitluck S."/>
            <person name="Kiss H."/>
            <person name="Brettin T."/>
            <person name="Bruce D."/>
            <person name="Han C."/>
            <person name="Schmutz J."/>
            <person name="Larimer F."/>
            <person name="Land M."/>
            <person name="Hauser L."/>
            <person name="Kyrpides N."/>
            <person name="Lykidis A."/>
            <person name="van de Werken H.J.G."/>
            <person name="Verhaart M.R.A."/>
            <person name="VanFossen A.L."/>
            <person name="Lewis D.L."/>
            <person name="Nichols J.D."/>
            <person name="Goorissen H.P."/>
            <person name="van Niel E.W.J."/>
            <person name="Stams F.J.M."/>
            <person name="Willquist K.U."/>
            <person name="Ward D.E."/>
            <person name="van der Oost J."/>
            <person name="Kelly R.M."/>
            <person name="Kengen S.M.W."/>
            <person name="Richardson P."/>
        </authorList>
    </citation>
    <scope>NUCLEOTIDE SEQUENCE [LARGE SCALE GENOMIC DNA]</scope>
    <source>
        <strain>ATCC 43494 / DSM 8903 / Tp8T 6331</strain>
    </source>
</reference>
<gene>
    <name evidence="1" type="primary">guaA</name>
    <name type="ordered locus">Csac_1978</name>
</gene>
<proteinExistence type="inferred from homology"/>
<feature type="chain" id="PRO_1000205290" description="GMP synthase [glutamine-hydrolyzing]">
    <location>
        <begin position="1"/>
        <end position="511"/>
    </location>
</feature>
<feature type="domain" description="Glutamine amidotransferase type-1" evidence="1">
    <location>
        <begin position="5"/>
        <end position="195"/>
    </location>
</feature>
<feature type="domain" description="GMPS ATP-PPase" evidence="1">
    <location>
        <begin position="196"/>
        <end position="386"/>
    </location>
</feature>
<feature type="active site" description="Nucleophile" evidence="1">
    <location>
        <position position="82"/>
    </location>
</feature>
<feature type="active site" evidence="1">
    <location>
        <position position="169"/>
    </location>
</feature>
<feature type="active site" evidence="1">
    <location>
        <position position="171"/>
    </location>
</feature>
<feature type="binding site" evidence="1">
    <location>
        <begin position="223"/>
        <end position="229"/>
    </location>
    <ligand>
        <name>ATP</name>
        <dbReference type="ChEBI" id="CHEBI:30616"/>
    </ligand>
</feature>
<name>GUAA_CALS8</name>